<keyword id="KW-0472">Membrane</keyword>
<keyword id="KW-1185">Reference proteome</keyword>
<keyword id="KW-0812">Transmembrane</keyword>
<keyword id="KW-1133">Transmembrane helix</keyword>
<dbReference type="EMBL" id="AY607690">
    <property type="protein sequence ID" value="AAT37942.1"/>
    <property type="molecule type" value="mRNA"/>
</dbReference>
<dbReference type="EMBL" id="AY554051">
    <property type="protein sequence ID" value="AAS72306.1"/>
    <property type="molecule type" value="mRNA"/>
</dbReference>
<dbReference type="EMBL" id="AC137616">
    <property type="protein sequence ID" value="AAT77365.1"/>
    <property type="status" value="ALT_SEQ"/>
    <property type="molecule type" value="Genomic_DNA"/>
</dbReference>
<dbReference type="EMBL" id="AP008211">
    <property type="protein sequence ID" value="BAF16505.1"/>
    <property type="molecule type" value="Genomic_DNA"/>
</dbReference>
<dbReference type="EMBL" id="AP014961">
    <property type="status" value="NOT_ANNOTATED_CDS"/>
    <property type="molecule type" value="Genomic_DNA"/>
</dbReference>
<dbReference type="RefSeq" id="XP_015640253.1">
    <property type="nucleotide sequence ID" value="XM_015784767.1"/>
</dbReference>
<dbReference type="FunCoup" id="Q0DKW8">
    <property type="interactions" value="64"/>
</dbReference>
<dbReference type="PaxDb" id="39947-Q0DKW8"/>
<dbReference type="EnsemblPlants" id="Os05t0138300-03">
    <property type="protein sequence ID" value="Os05t0138300-03"/>
    <property type="gene ID" value="Os05g0138300"/>
</dbReference>
<dbReference type="Gramene" id="Os05t0138300-03">
    <property type="protein sequence ID" value="Os05t0138300-03"/>
    <property type="gene ID" value="Os05g0138300"/>
</dbReference>
<dbReference type="KEGG" id="dosa:Os05g0138300"/>
<dbReference type="InParanoid" id="Q0DKW8"/>
<dbReference type="Proteomes" id="UP000000763">
    <property type="component" value="Chromosome 5"/>
</dbReference>
<dbReference type="Proteomes" id="UP000059680">
    <property type="component" value="Chromosome 5"/>
</dbReference>
<dbReference type="GO" id="GO:0016020">
    <property type="term" value="C:membrane"/>
    <property type="evidence" value="ECO:0007669"/>
    <property type="project" value="UniProtKB-SubCell"/>
</dbReference>
<dbReference type="InterPro" id="IPR000612">
    <property type="entry name" value="PMP3"/>
</dbReference>
<dbReference type="PANTHER" id="PTHR21659:SF120">
    <property type="entry name" value="HYDROPHOBIC PROTEIN LTI6B"/>
    <property type="match status" value="1"/>
</dbReference>
<dbReference type="PANTHER" id="PTHR21659">
    <property type="entry name" value="HYDROPHOBIC PROTEIN RCI2 LOW TEMPERATURE AND SALT RESPONSIVE PROTEIN LTI6 -RELATED"/>
    <property type="match status" value="1"/>
</dbReference>
<dbReference type="Pfam" id="PF01679">
    <property type="entry name" value="Pmp3"/>
    <property type="match status" value="1"/>
</dbReference>
<dbReference type="PROSITE" id="PS01309">
    <property type="entry name" value="UPF0057"/>
    <property type="match status" value="1"/>
</dbReference>
<accession>Q0DKW8</accession>
<accession>Q6AT93</accession>
<accession>Q6Q7C9</accession>
<accession>Q8LKS9</accession>
<comment type="function">
    <text evidence="1">Plays a role in the regulation of membrane potential. Could mediate a proton leak (By similarity).</text>
</comment>
<comment type="subcellular location">
    <subcellularLocation>
        <location evidence="4">Membrane</location>
        <topology evidence="4">Multi-pass membrane protein</topology>
    </subcellularLocation>
</comment>
<comment type="tissue specificity">
    <text evidence="3">Expressed in shoot and root of cold stressed seedlings.</text>
</comment>
<comment type="induction">
    <text evidence="3">Early induction by low temperature and abscisic acid (ABA). Late induction by drought and salt stresses.</text>
</comment>
<comment type="similarity">
    <text evidence="4">Belongs to the UPF0057 (PMP3) family.</text>
</comment>
<comment type="sequence caution" evidence="4">
    <conflict type="erroneous gene model prediction">
        <sequence resource="EMBL-CDS" id="AAT77365"/>
    </conflict>
</comment>
<protein>
    <recommendedName>
        <fullName>Hydrophobic protein LTI6B</fullName>
    </recommendedName>
    <alternativeName>
        <fullName>Low temperature-induced protein 6B</fullName>
    </alternativeName>
</protein>
<proteinExistence type="evidence at transcript level"/>
<gene>
    <name type="primary">LTI6B</name>
    <name type="synonym">DRR2</name>
    <name type="synonym">R1G1B</name>
    <name type="ordered locus">Os05g0138300</name>
    <name type="ordered locus">LOC_Os05g04700</name>
    <name type="ORF">OSJNBa0069I13.6</name>
</gene>
<evidence type="ECO:0000250" key="1"/>
<evidence type="ECO:0000255" key="2"/>
<evidence type="ECO:0000269" key="3">
    <source>
    </source>
</evidence>
<evidence type="ECO:0000305" key="4"/>
<organism>
    <name type="scientific">Oryza sativa subsp. japonica</name>
    <name type="common">Rice</name>
    <dbReference type="NCBI Taxonomy" id="39947"/>
    <lineage>
        <taxon>Eukaryota</taxon>
        <taxon>Viridiplantae</taxon>
        <taxon>Streptophyta</taxon>
        <taxon>Embryophyta</taxon>
        <taxon>Tracheophyta</taxon>
        <taxon>Spermatophyta</taxon>
        <taxon>Magnoliopsida</taxon>
        <taxon>Liliopsida</taxon>
        <taxon>Poales</taxon>
        <taxon>Poaceae</taxon>
        <taxon>BOP clade</taxon>
        <taxon>Oryzoideae</taxon>
        <taxon>Oryzeae</taxon>
        <taxon>Oryzinae</taxon>
        <taxon>Oryza</taxon>
        <taxon>Oryza sativa</taxon>
    </lineage>
</organism>
<sequence>MAGTANCIDILIAIILPPLGVFLKFGCGHEFWICLLLTFLGYIPGIIYAIYAITK</sequence>
<name>LTI6B_ORYSJ</name>
<feature type="chain" id="PRO_0000193982" description="Hydrophobic protein LTI6B">
    <location>
        <begin position="1"/>
        <end position="55"/>
    </location>
</feature>
<feature type="transmembrane region" description="Helical" evidence="2">
    <location>
        <begin position="8"/>
        <end position="28"/>
    </location>
</feature>
<feature type="transmembrane region" description="Helical" evidence="2">
    <location>
        <begin position="31"/>
        <end position="51"/>
    </location>
</feature>
<reference key="1">
    <citation type="journal article" date="2005" name="Gene">
        <title>The OsLti6 genes encoding low-molecular-weight membrane proteins are differentially expressed in rice cultivars with contrasting sensitivity to low temperature.</title>
        <authorList>
            <person name="Morsy M.R."/>
            <person name="Almutairi A.M."/>
            <person name="Gibbons J."/>
            <person name="Yun S.J."/>
            <person name="De Los Reyes B.G."/>
        </authorList>
    </citation>
    <scope>NUCLEOTIDE SEQUENCE [MRNA]</scope>
    <scope>SUBCELLULAR LOCATION</scope>
    <scope>TISSUE SPECIFICITY</scope>
    <scope>INDUCTION</scope>
    <source>
        <strain>cv. CT6748-8-CA-17</strain>
        <tissue>Seedling</tissue>
    </source>
</reference>
<reference key="2">
    <citation type="submission" date="2004-02" db="EMBL/GenBank/DDBJ databases">
        <title>Rice homologs of the barley low-temperature induced gene blt101 are differentially regulated by ABA, methyl jasmonate, ethephon, and drought stress.</title>
        <authorList>
            <person name="Akiyama T."/>
        </authorList>
    </citation>
    <scope>NUCLEOTIDE SEQUENCE [MRNA]</scope>
    <source>
        <strain>cv. Yukihikari</strain>
    </source>
</reference>
<reference key="3">
    <citation type="journal article" date="2005" name="Mol. Genet. Genomics">
        <title>A fine physical map of the rice chromosome 5.</title>
        <authorList>
            <person name="Cheng C.-H."/>
            <person name="Chung M.C."/>
            <person name="Liu S.-M."/>
            <person name="Chen S.-K."/>
            <person name="Kao F.Y."/>
            <person name="Lin S.-J."/>
            <person name="Hsiao S.-H."/>
            <person name="Tseng I.C."/>
            <person name="Hsing Y.-I.C."/>
            <person name="Wu H.-P."/>
            <person name="Chen C.-S."/>
            <person name="Shaw J.-F."/>
            <person name="Wu J."/>
            <person name="Matsumoto T."/>
            <person name="Sasaki T."/>
            <person name="Chen H.-C."/>
            <person name="Chow T.-Y."/>
        </authorList>
    </citation>
    <scope>NUCLEOTIDE SEQUENCE [LARGE SCALE GENOMIC DNA]</scope>
    <source>
        <strain>cv. Nipponbare</strain>
    </source>
</reference>
<reference key="4">
    <citation type="journal article" date="2005" name="Nature">
        <title>The map-based sequence of the rice genome.</title>
        <authorList>
            <consortium name="International rice genome sequencing project (IRGSP)"/>
        </authorList>
    </citation>
    <scope>NUCLEOTIDE SEQUENCE [LARGE SCALE GENOMIC DNA]</scope>
    <source>
        <strain>cv. Nipponbare</strain>
    </source>
</reference>
<reference key="5">
    <citation type="journal article" date="2008" name="Nucleic Acids Res.">
        <title>The rice annotation project database (RAP-DB): 2008 update.</title>
        <authorList>
            <consortium name="The rice annotation project (RAP)"/>
        </authorList>
    </citation>
    <scope>GENOME REANNOTATION</scope>
    <source>
        <strain>cv. Nipponbare</strain>
    </source>
</reference>
<reference key="6">
    <citation type="journal article" date="2013" name="Rice">
        <title>Improvement of the Oryza sativa Nipponbare reference genome using next generation sequence and optical map data.</title>
        <authorList>
            <person name="Kawahara Y."/>
            <person name="de la Bastide M."/>
            <person name="Hamilton J.P."/>
            <person name="Kanamori H."/>
            <person name="McCombie W.R."/>
            <person name="Ouyang S."/>
            <person name="Schwartz D.C."/>
            <person name="Tanaka T."/>
            <person name="Wu J."/>
            <person name="Zhou S."/>
            <person name="Childs K.L."/>
            <person name="Davidson R.M."/>
            <person name="Lin H."/>
            <person name="Quesada-Ocampo L."/>
            <person name="Vaillancourt B."/>
            <person name="Sakai H."/>
            <person name="Lee S.S."/>
            <person name="Kim J."/>
            <person name="Numa H."/>
            <person name="Itoh T."/>
            <person name="Buell C.R."/>
            <person name="Matsumoto T."/>
        </authorList>
    </citation>
    <scope>GENOME REANNOTATION</scope>
    <source>
        <strain>cv. Nipponbare</strain>
    </source>
</reference>